<reference key="1">
    <citation type="submission" date="2007-02" db="EMBL/GenBank/DDBJ databases">
        <title>Complete sequence of chromosome 1 of Rhodobacter sphaeroides ATCC 17029.</title>
        <authorList>
            <person name="Copeland A."/>
            <person name="Lucas S."/>
            <person name="Lapidus A."/>
            <person name="Barry K."/>
            <person name="Detter J.C."/>
            <person name="Glavina del Rio T."/>
            <person name="Hammon N."/>
            <person name="Israni S."/>
            <person name="Dalin E."/>
            <person name="Tice H."/>
            <person name="Pitluck S."/>
            <person name="Kiss H."/>
            <person name="Brettin T."/>
            <person name="Bruce D."/>
            <person name="Han C."/>
            <person name="Tapia R."/>
            <person name="Gilna P."/>
            <person name="Schmutz J."/>
            <person name="Larimer F."/>
            <person name="Land M."/>
            <person name="Hauser L."/>
            <person name="Kyrpides N."/>
            <person name="Mikhailova N."/>
            <person name="Richardson P."/>
            <person name="Mackenzie C."/>
            <person name="Choudhary M."/>
            <person name="Donohue T.J."/>
            <person name="Kaplan S."/>
        </authorList>
    </citation>
    <scope>NUCLEOTIDE SEQUENCE [LARGE SCALE GENOMIC DNA]</scope>
    <source>
        <strain>ATCC 17029 / ATH 2.4.9</strain>
    </source>
</reference>
<evidence type="ECO:0000255" key="1">
    <source>
        <dbReference type="HAMAP-Rule" id="MF_01310"/>
    </source>
</evidence>
<evidence type="ECO:0000305" key="2"/>
<dbReference type="EMBL" id="CP000577">
    <property type="protein sequence ID" value="ABN75500.1"/>
    <property type="molecule type" value="Genomic_DNA"/>
</dbReference>
<dbReference type="RefSeq" id="WP_002722534.1">
    <property type="nucleotide sequence ID" value="NC_009049.1"/>
</dbReference>
<dbReference type="SMR" id="A3PGN4"/>
<dbReference type="GeneID" id="67445523"/>
<dbReference type="KEGG" id="rsh:Rsph17029_0384"/>
<dbReference type="HOGENOM" id="CLU_072439_5_0_5"/>
<dbReference type="GO" id="GO:1990904">
    <property type="term" value="C:ribonucleoprotein complex"/>
    <property type="evidence" value="ECO:0007669"/>
    <property type="project" value="UniProtKB-KW"/>
</dbReference>
<dbReference type="GO" id="GO:0005840">
    <property type="term" value="C:ribosome"/>
    <property type="evidence" value="ECO:0007669"/>
    <property type="project" value="UniProtKB-KW"/>
</dbReference>
<dbReference type="GO" id="GO:0019843">
    <property type="term" value="F:rRNA binding"/>
    <property type="evidence" value="ECO:0007669"/>
    <property type="project" value="UniProtKB-UniRule"/>
</dbReference>
<dbReference type="GO" id="GO:0003735">
    <property type="term" value="F:structural constituent of ribosome"/>
    <property type="evidence" value="ECO:0007669"/>
    <property type="project" value="InterPro"/>
</dbReference>
<dbReference type="GO" id="GO:0006412">
    <property type="term" value="P:translation"/>
    <property type="evidence" value="ECO:0007669"/>
    <property type="project" value="UniProtKB-UniRule"/>
</dbReference>
<dbReference type="FunFam" id="3.30.420.80:FF:000001">
    <property type="entry name" value="30S ribosomal protein S11"/>
    <property type="match status" value="1"/>
</dbReference>
<dbReference type="Gene3D" id="3.30.420.80">
    <property type="entry name" value="Ribosomal protein S11"/>
    <property type="match status" value="1"/>
</dbReference>
<dbReference type="HAMAP" id="MF_01310">
    <property type="entry name" value="Ribosomal_uS11"/>
    <property type="match status" value="1"/>
</dbReference>
<dbReference type="InterPro" id="IPR001971">
    <property type="entry name" value="Ribosomal_uS11"/>
</dbReference>
<dbReference type="InterPro" id="IPR019981">
    <property type="entry name" value="Ribosomal_uS11_bac-type"/>
</dbReference>
<dbReference type="InterPro" id="IPR018102">
    <property type="entry name" value="Ribosomal_uS11_CS"/>
</dbReference>
<dbReference type="InterPro" id="IPR036967">
    <property type="entry name" value="Ribosomal_uS11_sf"/>
</dbReference>
<dbReference type="NCBIfam" id="NF003698">
    <property type="entry name" value="PRK05309.1"/>
    <property type="match status" value="1"/>
</dbReference>
<dbReference type="NCBIfam" id="TIGR03632">
    <property type="entry name" value="uS11_bact"/>
    <property type="match status" value="1"/>
</dbReference>
<dbReference type="PANTHER" id="PTHR11759">
    <property type="entry name" value="40S RIBOSOMAL PROTEIN S14/30S RIBOSOMAL PROTEIN S11"/>
    <property type="match status" value="1"/>
</dbReference>
<dbReference type="Pfam" id="PF00411">
    <property type="entry name" value="Ribosomal_S11"/>
    <property type="match status" value="1"/>
</dbReference>
<dbReference type="PIRSF" id="PIRSF002131">
    <property type="entry name" value="Ribosomal_S11"/>
    <property type="match status" value="1"/>
</dbReference>
<dbReference type="SUPFAM" id="SSF53137">
    <property type="entry name" value="Translational machinery components"/>
    <property type="match status" value="1"/>
</dbReference>
<dbReference type="PROSITE" id="PS00054">
    <property type="entry name" value="RIBOSOMAL_S11"/>
    <property type="match status" value="1"/>
</dbReference>
<accession>A3PGN4</accession>
<keyword id="KW-0687">Ribonucleoprotein</keyword>
<keyword id="KW-0689">Ribosomal protein</keyword>
<keyword id="KW-0694">RNA-binding</keyword>
<keyword id="KW-0699">rRNA-binding</keyword>
<proteinExistence type="inferred from homology"/>
<comment type="function">
    <text evidence="1">Located on the platform of the 30S subunit, it bridges several disparate RNA helices of the 16S rRNA. Forms part of the Shine-Dalgarno cleft in the 70S ribosome.</text>
</comment>
<comment type="subunit">
    <text evidence="1">Part of the 30S ribosomal subunit. Interacts with proteins S7 and S18. Binds to IF-3.</text>
</comment>
<comment type="similarity">
    <text evidence="1">Belongs to the universal ribosomal protein uS11 family.</text>
</comment>
<protein>
    <recommendedName>
        <fullName evidence="1">Small ribosomal subunit protein uS11</fullName>
    </recommendedName>
    <alternativeName>
        <fullName evidence="2">30S ribosomal protein S11</fullName>
    </alternativeName>
</protein>
<organism>
    <name type="scientific">Cereibacter sphaeroides (strain ATCC 17029 / ATH 2.4.9)</name>
    <name type="common">Rhodobacter sphaeroides</name>
    <dbReference type="NCBI Taxonomy" id="349101"/>
    <lineage>
        <taxon>Bacteria</taxon>
        <taxon>Pseudomonadati</taxon>
        <taxon>Pseudomonadota</taxon>
        <taxon>Alphaproteobacteria</taxon>
        <taxon>Rhodobacterales</taxon>
        <taxon>Paracoccaceae</taxon>
        <taxon>Cereibacter</taxon>
    </lineage>
</organism>
<gene>
    <name evidence="1" type="primary">rpsK</name>
    <name type="ordered locus">Rsph17029_0384</name>
</gene>
<name>RS11_CERS1</name>
<feature type="chain" id="PRO_0000294835" description="Small ribosomal subunit protein uS11">
    <location>
        <begin position="1"/>
        <end position="129"/>
    </location>
</feature>
<sequence>MARDKTRMKRKERKNIAAGVAHVNSSFNNTKILISDVQGNAISWSSAGTMGFKGSRKSTPYAAQMAAEDAAKKAQDHGMKTIEVEVQGPGSGRESALRALAAAGLNITSIRDVTPMAHNGCRPPKRRRV</sequence>